<sequence length="102" mass="11540">MILLKSEHGGKRKEMRQDDLMGPNHFSLRIMYKIIIYTYPVSLYAVKELNLSKTFSISALGILNSNSNRSPAKKQTFFSACVAKSYSSFFISICILDLASHL</sequence>
<proteinExistence type="predicted"/>
<feature type="chain" id="PRO_0000202450" description="Uncharacterized protein YBL071C">
    <location>
        <begin position="1"/>
        <end position="102"/>
    </location>
</feature>
<feature type="transmembrane region" description="Helical" evidence="1">
    <location>
        <begin position="77"/>
        <end position="96"/>
    </location>
</feature>
<comment type="subcellular location">
    <subcellularLocation>
        <location evidence="2">Membrane</location>
        <topology evidence="2">Single-pass membrane protein</topology>
    </subcellularLocation>
</comment>
<organism>
    <name type="scientific">Saccharomyces cerevisiae (strain ATCC 204508 / S288c)</name>
    <name type="common">Baker's yeast</name>
    <dbReference type="NCBI Taxonomy" id="559292"/>
    <lineage>
        <taxon>Eukaryota</taxon>
        <taxon>Fungi</taxon>
        <taxon>Dikarya</taxon>
        <taxon>Ascomycota</taxon>
        <taxon>Saccharomycotina</taxon>
        <taxon>Saccharomycetes</taxon>
        <taxon>Saccharomycetales</taxon>
        <taxon>Saccharomycetaceae</taxon>
        <taxon>Saccharomyces</taxon>
    </lineage>
</organism>
<gene>
    <name type="ordered locus">YBL071C</name>
    <name type="ORF">YBL0615</name>
</gene>
<accession>P38185</accession>
<accession>A0A1D0CXR0</accession>
<dbReference type="EMBL" id="Z35832">
    <property type="protein sequence ID" value="CAA84892.1"/>
    <property type="molecule type" value="Genomic_DNA"/>
</dbReference>
<dbReference type="EMBL" id="AY693263">
    <property type="protein sequence ID" value="AAT93282.1"/>
    <property type="molecule type" value="Genomic_DNA"/>
</dbReference>
<dbReference type="EMBL" id="BK006936">
    <property type="protein sequence ID" value="DAA79922.1"/>
    <property type="molecule type" value="Genomic_DNA"/>
</dbReference>
<dbReference type="PIR" id="S45807">
    <property type="entry name" value="S45807"/>
</dbReference>
<dbReference type="RefSeq" id="NP_001333723.1">
    <property type="nucleotide sequence ID" value="NM_001346794.1"/>
</dbReference>
<dbReference type="DIP" id="DIP-3946N"/>
<dbReference type="FunCoup" id="P38185">
    <property type="interactions" value="18"/>
</dbReference>
<dbReference type="IntAct" id="P38185">
    <property type="interactions" value="2"/>
</dbReference>
<dbReference type="MINT" id="P38185"/>
<dbReference type="STRING" id="4932.YBL071C"/>
<dbReference type="PaxDb" id="4932-YBL071C"/>
<dbReference type="EnsemblFungi" id="YBL071C_mRNA">
    <property type="protein sequence ID" value="YBL071C"/>
    <property type="gene ID" value="YBL071C"/>
</dbReference>
<dbReference type="GeneID" id="852208"/>
<dbReference type="KEGG" id="sce:YBL071C"/>
<dbReference type="AGR" id="SGD:S000000167"/>
<dbReference type="SGD" id="S000000167">
    <property type="gene designation" value="YBL071C"/>
</dbReference>
<dbReference type="HOGENOM" id="CLU_2279651_0_0_1"/>
<dbReference type="InParanoid" id="P38185"/>
<dbReference type="PRO" id="PR:P38185"/>
<dbReference type="Proteomes" id="UP000002311">
    <property type="component" value="Chromosome II"/>
</dbReference>
<dbReference type="RNAct" id="P38185">
    <property type="molecule type" value="protein"/>
</dbReference>
<dbReference type="GO" id="GO:0016020">
    <property type="term" value="C:membrane"/>
    <property type="evidence" value="ECO:0007669"/>
    <property type="project" value="UniProtKB-SubCell"/>
</dbReference>
<protein>
    <recommendedName>
        <fullName>Uncharacterized protein YBL071C</fullName>
    </recommendedName>
</protein>
<keyword id="KW-0472">Membrane</keyword>
<keyword id="KW-1185">Reference proteome</keyword>
<keyword id="KW-0812">Transmembrane</keyword>
<keyword id="KW-1133">Transmembrane helix</keyword>
<reference key="1">
    <citation type="journal article" date="1994" name="EMBO J.">
        <title>Complete DNA sequence of yeast chromosome II.</title>
        <authorList>
            <person name="Feldmann H."/>
            <person name="Aigle M."/>
            <person name="Aljinovic G."/>
            <person name="Andre B."/>
            <person name="Baclet M.C."/>
            <person name="Barthe C."/>
            <person name="Baur A."/>
            <person name="Becam A.-M."/>
            <person name="Biteau N."/>
            <person name="Boles E."/>
            <person name="Brandt T."/>
            <person name="Brendel M."/>
            <person name="Brueckner M."/>
            <person name="Bussereau F."/>
            <person name="Christiansen C."/>
            <person name="Contreras R."/>
            <person name="Crouzet M."/>
            <person name="Cziepluch C."/>
            <person name="Demolis N."/>
            <person name="Delaveau T."/>
            <person name="Doignon F."/>
            <person name="Domdey H."/>
            <person name="Duesterhus S."/>
            <person name="Dubois E."/>
            <person name="Dujon B."/>
            <person name="El Bakkoury M."/>
            <person name="Entian K.-D."/>
            <person name="Feuermann M."/>
            <person name="Fiers W."/>
            <person name="Fobo G.M."/>
            <person name="Fritz C."/>
            <person name="Gassenhuber J."/>
            <person name="Glansdorff N."/>
            <person name="Goffeau A."/>
            <person name="Grivell L.A."/>
            <person name="de Haan M."/>
            <person name="Hein C."/>
            <person name="Herbert C.J."/>
            <person name="Hollenberg C.P."/>
            <person name="Holmstroem K."/>
            <person name="Jacq C."/>
            <person name="Jacquet M."/>
            <person name="Jauniaux J.-C."/>
            <person name="Jonniaux J.-L."/>
            <person name="Kallesoee T."/>
            <person name="Kiesau P."/>
            <person name="Kirchrath L."/>
            <person name="Koetter P."/>
            <person name="Korol S."/>
            <person name="Liebl S."/>
            <person name="Logghe M."/>
            <person name="Lohan A.J.E."/>
            <person name="Louis E.J."/>
            <person name="Li Z.Y."/>
            <person name="Maat M.J."/>
            <person name="Mallet L."/>
            <person name="Mannhaupt G."/>
            <person name="Messenguy F."/>
            <person name="Miosga T."/>
            <person name="Molemans F."/>
            <person name="Mueller S."/>
            <person name="Nasr F."/>
            <person name="Obermaier B."/>
            <person name="Perea J."/>
            <person name="Pierard A."/>
            <person name="Piravandi E."/>
            <person name="Pohl F.M."/>
            <person name="Pohl T.M."/>
            <person name="Potier S."/>
            <person name="Proft M."/>
            <person name="Purnelle B."/>
            <person name="Ramezani Rad M."/>
            <person name="Rieger M."/>
            <person name="Rose M."/>
            <person name="Schaaff-Gerstenschlaeger I."/>
            <person name="Scherens B."/>
            <person name="Schwarzlose C."/>
            <person name="Skala J."/>
            <person name="Slonimski P.P."/>
            <person name="Smits P.H.M."/>
            <person name="Souciet J.-L."/>
            <person name="Steensma H.Y."/>
            <person name="Stucka R."/>
            <person name="Urrestarazu L.A."/>
            <person name="van der Aart Q.J.M."/>
            <person name="Van Dyck L."/>
            <person name="Vassarotti A."/>
            <person name="Vetter I."/>
            <person name="Vierendeels F."/>
            <person name="Vissers S."/>
            <person name="Wagner G."/>
            <person name="de Wergifosse P."/>
            <person name="Wolfe K.H."/>
            <person name="Zagulski M."/>
            <person name="Zimmermann F.K."/>
            <person name="Mewes H.-W."/>
            <person name="Kleine K."/>
        </authorList>
    </citation>
    <scope>NUCLEOTIDE SEQUENCE [LARGE SCALE GENOMIC DNA]</scope>
    <source>
        <strain>ATCC 204508 / S288c</strain>
    </source>
</reference>
<reference key="2">
    <citation type="journal article" date="2014" name="G3 (Bethesda)">
        <title>The reference genome sequence of Saccharomyces cerevisiae: Then and now.</title>
        <authorList>
            <person name="Engel S.R."/>
            <person name="Dietrich F.S."/>
            <person name="Fisk D.G."/>
            <person name="Binkley G."/>
            <person name="Balakrishnan R."/>
            <person name="Costanzo M.C."/>
            <person name="Dwight S.S."/>
            <person name="Hitz B.C."/>
            <person name="Karra K."/>
            <person name="Nash R.S."/>
            <person name="Weng S."/>
            <person name="Wong E.D."/>
            <person name="Lloyd P."/>
            <person name="Skrzypek M.S."/>
            <person name="Miyasato S.R."/>
            <person name="Simison M."/>
            <person name="Cherry J.M."/>
        </authorList>
    </citation>
    <scope>GENOME REANNOTATION</scope>
    <source>
        <strain>ATCC 204508 / S288c</strain>
    </source>
</reference>
<reference key="3">
    <citation type="journal article" date="2007" name="Genome Res.">
        <title>Approaching a complete repository of sequence-verified protein-encoding clones for Saccharomyces cerevisiae.</title>
        <authorList>
            <person name="Hu Y."/>
            <person name="Rolfs A."/>
            <person name="Bhullar B."/>
            <person name="Murthy T.V.S."/>
            <person name="Zhu C."/>
            <person name="Berger M.F."/>
            <person name="Camargo A.A."/>
            <person name="Kelley F."/>
            <person name="McCarron S."/>
            <person name="Jepson D."/>
            <person name="Richardson A."/>
            <person name="Raphael J."/>
            <person name="Moreira D."/>
            <person name="Taycher E."/>
            <person name="Zuo D."/>
            <person name="Mohr S."/>
            <person name="Kane M.F."/>
            <person name="Williamson J."/>
            <person name="Simpson A.J.G."/>
            <person name="Bulyk M.L."/>
            <person name="Harlow E."/>
            <person name="Marsischky G."/>
            <person name="Kolodner R.D."/>
            <person name="LaBaer J."/>
        </authorList>
    </citation>
    <scope>NUCLEOTIDE SEQUENCE [GENOMIC DNA]</scope>
    <source>
        <strain>ATCC 204508 / S288c</strain>
    </source>
</reference>
<evidence type="ECO:0000255" key="1"/>
<evidence type="ECO:0000305" key="2"/>
<name>YBH1_YEAST</name>